<organism>
    <name type="scientific">Trypanosoma brucei brucei</name>
    <dbReference type="NCBI Taxonomy" id="5702"/>
    <lineage>
        <taxon>Eukaryota</taxon>
        <taxon>Discoba</taxon>
        <taxon>Euglenozoa</taxon>
        <taxon>Kinetoplastea</taxon>
        <taxon>Metakinetoplastina</taxon>
        <taxon>Trypanosomatida</taxon>
        <taxon>Trypanosomatidae</taxon>
        <taxon>Trypanosoma</taxon>
    </lineage>
</organism>
<gene>
    <name type="primary">HSP83</name>
</gene>
<sequence length="703" mass="80716">MTETFAFQAEINQLMSLIINTFYSNKEIFLRELISNSSDACDKIRYQSLTNQSVLGDEPHLRIRVIPDRVNKTLTVEDSGIGMTKADLVNNLGTIARSGTKSFMEALEAGGDMSMIGQFGVGFYSAYLVADRVTVVSKNNEDDAYTWESSAGGTFTVTSTPDCDLKRGTRIVLHLKEDQQEYLEERRLKDLIKKHSEFIGYDIELMVENTTEKEVTDEDEDEEAAKKAEEGEEPKVEEVKDGVDADAKKKKTKKVKEVKQEFVVQNKHKPLWTRDPKDVTKEEYASFYKAISNDWEEQLSTKHFSVEGQLEFRAILFLPKRAPFDMFEPNKKRNNIKLYVRRVFIMDNCEDLCPEWLGFLRGVVDSEDLPLNISRENLQQNKILKVIRKNIVKKALELFEELAGNKEDYKKFYEQFSKNVKLGIHEDSTNRKKLMELLRFHSSESGEEMTTLKDYVTRMKEGQKCIYYVTGDSKKKLETSPFIEQARRRGMEVLFMTDPIDEYVMQQVKDFEDKKFACLTKEGVHFEETEEEKKQREEEKASYERLCKAMKEVLGDKVEKVVVSDRLATSPCILVTSEFGWSAHMEQIMRNQALRDSSMSAYMMRKKTMEINTTHAIVKELKRRVEADENDKAAKDLIFLLFDTSLLTSGFTLDDPTAYADRIHRMIKLGLSLDDDAEEEEAQAPVAAAANSSTGASGMEEVD</sequence>
<dbReference type="EMBL" id="X14176">
    <property type="protein sequence ID" value="CAA32377.1"/>
    <property type="molecule type" value="Genomic_DNA"/>
</dbReference>
<dbReference type="PIR" id="S08119">
    <property type="entry name" value="S08119"/>
</dbReference>
<dbReference type="PDB" id="3OPD">
    <property type="method" value="X-ray"/>
    <property type="resolution" value="2.60 A"/>
    <property type="chains" value="A/B/C=1-213"/>
</dbReference>
<dbReference type="PDBsum" id="3OPD"/>
<dbReference type="SMR" id="P12861"/>
<dbReference type="EvolutionaryTrace" id="P12861"/>
<dbReference type="GO" id="GO:0005813">
    <property type="term" value="C:centrosome"/>
    <property type="evidence" value="ECO:0000247"/>
    <property type="project" value="GeneDB"/>
</dbReference>
<dbReference type="GO" id="GO:0005737">
    <property type="term" value="C:cytoplasm"/>
    <property type="evidence" value="ECO:0000314"/>
    <property type="project" value="GeneDB"/>
</dbReference>
<dbReference type="GO" id="GO:0005654">
    <property type="term" value="C:nucleoplasm"/>
    <property type="evidence" value="ECO:0000314"/>
    <property type="project" value="GeneDB"/>
</dbReference>
<dbReference type="GO" id="GO:0005524">
    <property type="term" value="F:ATP binding"/>
    <property type="evidence" value="ECO:0007669"/>
    <property type="project" value="UniProtKB-KW"/>
</dbReference>
<dbReference type="GO" id="GO:0016887">
    <property type="term" value="F:ATP hydrolysis activity"/>
    <property type="evidence" value="ECO:0000303"/>
    <property type="project" value="UniProtKB"/>
</dbReference>
<dbReference type="GO" id="GO:0140662">
    <property type="term" value="F:ATP-dependent protein folding chaperone"/>
    <property type="evidence" value="ECO:0007669"/>
    <property type="project" value="InterPro"/>
</dbReference>
<dbReference type="GO" id="GO:0051082">
    <property type="term" value="F:unfolded protein binding"/>
    <property type="evidence" value="ECO:0007669"/>
    <property type="project" value="InterPro"/>
</dbReference>
<dbReference type="GO" id="GO:0006457">
    <property type="term" value="P:protein folding"/>
    <property type="evidence" value="ECO:0000247"/>
    <property type="project" value="GeneDB"/>
</dbReference>
<dbReference type="GO" id="GO:0042026">
    <property type="term" value="P:protein refolding"/>
    <property type="evidence" value="ECO:0000247"/>
    <property type="project" value="GeneDB"/>
</dbReference>
<dbReference type="GO" id="GO:0009408">
    <property type="term" value="P:response to heat"/>
    <property type="evidence" value="ECO:0000303"/>
    <property type="project" value="UniProtKB"/>
</dbReference>
<dbReference type="GO" id="GO:0006986">
    <property type="term" value="P:response to unfolded protein"/>
    <property type="evidence" value="ECO:0000247"/>
    <property type="project" value="GeneDB"/>
</dbReference>
<dbReference type="CDD" id="cd16927">
    <property type="entry name" value="HATPase_Hsp90-like"/>
    <property type="match status" value="1"/>
</dbReference>
<dbReference type="FunFam" id="1.20.120.790:FF:000001">
    <property type="entry name" value="Heat shock protein 90 alpha"/>
    <property type="match status" value="1"/>
</dbReference>
<dbReference type="FunFam" id="3.30.230.80:FF:000001">
    <property type="entry name" value="Heat shock protein 90 alpha"/>
    <property type="match status" value="1"/>
</dbReference>
<dbReference type="FunFam" id="3.40.50.11260:FF:000001">
    <property type="entry name" value="Heat shock protein 90 alpha"/>
    <property type="match status" value="1"/>
</dbReference>
<dbReference type="FunFam" id="3.30.565.10:FF:000001">
    <property type="entry name" value="Heat shock protein HSP 90-alpha"/>
    <property type="match status" value="1"/>
</dbReference>
<dbReference type="Gene3D" id="3.30.230.80">
    <property type="match status" value="1"/>
</dbReference>
<dbReference type="Gene3D" id="3.40.50.11260">
    <property type="match status" value="1"/>
</dbReference>
<dbReference type="Gene3D" id="1.20.120.790">
    <property type="entry name" value="Heat shock protein 90, C-terminal domain"/>
    <property type="match status" value="1"/>
</dbReference>
<dbReference type="Gene3D" id="3.30.565.10">
    <property type="entry name" value="Histidine kinase-like ATPase, C-terminal domain"/>
    <property type="match status" value="1"/>
</dbReference>
<dbReference type="HAMAP" id="MF_00505">
    <property type="entry name" value="HSP90"/>
    <property type="match status" value="1"/>
</dbReference>
<dbReference type="InterPro" id="IPR036890">
    <property type="entry name" value="HATPase_C_sf"/>
</dbReference>
<dbReference type="InterPro" id="IPR019805">
    <property type="entry name" value="Heat_shock_protein_90_CS"/>
</dbReference>
<dbReference type="InterPro" id="IPR037196">
    <property type="entry name" value="HSP90_C"/>
</dbReference>
<dbReference type="InterPro" id="IPR001404">
    <property type="entry name" value="Hsp90_fam"/>
</dbReference>
<dbReference type="InterPro" id="IPR020575">
    <property type="entry name" value="Hsp90_N"/>
</dbReference>
<dbReference type="InterPro" id="IPR020568">
    <property type="entry name" value="Ribosomal_Su5_D2-typ_SF"/>
</dbReference>
<dbReference type="NCBIfam" id="NF003555">
    <property type="entry name" value="PRK05218.1"/>
    <property type="match status" value="1"/>
</dbReference>
<dbReference type="PANTHER" id="PTHR11528">
    <property type="entry name" value="HEAT SHOCK PROTEIN 90 FAMILY MEMBER"/>
    <property type="match status" value="1"/>
</dbReference>
<dbReference type="Pfam" id="PF02518">
    <property type="entry name" value="HATPase_c"/>
    <property type="match status" value="1"/>
</dbReference>
<dbReference type="Pfam" id="PF00183">
    <property type="entry name" value="HSP90"/>
    <property type="match status" value="1"/>
</dbReference>
<dbReference type="PIRSF" id="PIRSF002583">
    <property type="entry name" value="Hsp90"/>
    <property type="match status" value="1"/>
</dbReference>
<dbReference type="PRINTS" id="PR00775">
    <property type="entry name" value="HEATSHOCK90"/>
</dbReference>
<dbReference type="SMART" id="SM00387">
    <property type="entry name" value="HATPase_c"/>
    <property type="match status" value="1"/>
</dbReference>
<dbReference type="SUPFAM" id="SSF55874">
    <property type="entry name" value="ATPase domain of HSP90 chaperone/DNA topoisomerase II/histidine kinase"/>
    <property type="match status" value="1"/>
</dbReference>
<dbReference type="SUPFAM" id="SSF110942">
    <property type="entry name" value="HSP90 C-terminal domain"/>
    <property type="match status" value="1"/>
</dbReference>
<dbReference type="SUPFAM" id="SSF54211">
    <property type="entry name" value="Ribosomal protein S5 domain 2-like"/>
    <property type="match status" value="1"/>
</dbReference>
<dbReference type="PROSITE" id="PS00298">
    <property type="entry name" value="HSP90"/>
    <property type="match status" value="1"/>
</dbReference>
<protein>
    <recommendedName>
        <fullName>Heat shock protein 83</fullName>
    </recommendedName>
</protein>
<proteinExistence type="evidence at protein level"/>
<evidence type="ECO:0000250" key="1"/>
<evidence type="ECO:0000256" key="2">
    <source>
        <dbReference type="SAM" id="MobiDB-lite"/>
    </source>
</evidence>
<evidence type="ECO:0000305" key="3"/>
<evidence type="ECO:0007829" key="4">
    <source>
        <dbReference type="PDB" id="3OPD"/>
    </source>
</evidence>
<name>HSP83_TRYBB</name>
<accession>P12861</accession>
<feature type="chain" id="PRO_0000062944" description="Heat shock protein 83">
    <location>
        <begin position="1"/>
        <end position="703"/>
    </location>
</feature>
<feature type="region of interest" description="Disordered" evidence="2">
    <location>
        <begin position="211"/>
        <end position="247"/>
    </location>
</feature>
<feature type="region of interest" description="Disordered" evidence="2">
    <location>
        <begin position="678"/>
        <end position="703"/>
    </location>
</feature>
<feature type="short sequence motif" description="TPR repeat-binding">
    <location>
        <begin position="699"/>
        <end position="703"/>
    </location>
</feature>
<feature type="compositionally biased region" description="Basic and acidic residues" evidence="2">
    <location>
        <begin position="224"/>
        <end position="247"/>
    </location>
</feature>
<feature type="binding site" evidence="1">
    <location>
        <position position="36"/>
    </location>
    <ligand>
        <name>ATP</name>
        <dbReference type="ChEBI" id="CHEBI:30616"/>
    </ligand>
</feature>
<feature type="binding site" evidence="1">
    <location>
        <position position="78"/>
    </location>
    <ligand>
        <name>ATP</name>
        <dbReference type="ChEBI" id="CHEBI:30616"/>
    </ligand>
</feature>
<feature type="binding site" evidence="1">
    <location>
        <position position="123"/>
    </location>
    <ligand>
        <name>ATP</name>
        <dbReference type="ChEBI" id="CHEBI:30616"/>
    </ligand>
</feature>
<feature type="binding site" evidence="1">
    <location>
        <position position="375"/>
    </location>
    <ligand>
        <name>ATP</name>
        <dbReference type="ChEBI" id="CHEBI:30616"/>
    </ligand>
</feature>
<feature type="helix" evidence="4">
    <location>
        <begin position="9"/>
        <end position="20"/>
    </location>
</feature>
<feature type="helix" evidence="4">
    <location>
        <begin position="26"/>
        <end position="28"/>
    </location>
</feature>
<feature type="helix" evidence="4">
    <location>
        <begin position="29"/>
        <end position="50"/>
    </location>
</feature>
<feature type="helix" evidence="4">
    <location>
        <begin position="52"/>
        <end position="54"/>
    </location>
</feature>
<feature type="strand" evidence="4">
    <location>
        <begin position="63"/>
        <end position="68"/>
    </location>
</feature>
<feature type="turn" evidence="4">
    <location>
        <begin position="69"/>
        <end position="72"/>
    </location>
</feature>
<feature type="strand" evidence="4">
    <location>
        <begin position="73"/>
        <end position="78"/>
    </location>
</feature>
<feature type="helix" evidence="4">
    <location>
        <begin position="85"/>
        <end position="90"/>
    </location>
</feature>
<feature type="turn" evidence="4">
    <location>
        <begin position="91"/>
        <end position="93"/>
    </location>
</feature>
<feature type="helix" evidence="4">
    <location>
        <begin position="94"/>
        <end position="108"/>
    </location>
</feature>
<feature type="helix" evidence="4">
    <location>
        <begin position="113"/>
        <end position="119"/>
    </location>
</feature>
<feature type="helix" evidence="4">
    <location>
        <begin position="122"/>
        <end position="128"/>
    </location>
</feature>
<feature type="strand" evidence="4">
    <location>
        <begin position="130"/>
        <end position="138"/>
    </location>
</feature>
<feature type="strand" evidence="4">
    <location>
        <begin position="145"/>
        <end position="149"/>
    </location>
</feature>
<feature type="strand" evidence="4">
    <location>
        <begin position="154"/>
        <end position="159"/>
    </location>
</feature>
<feature type="strand" evidence="4">
    <location>
        <begin position="167"/>
        <end position="175"/>
    </location>
</feature>
<feature type="helix" evidence="4">
    <location>
        <begin position="177"/>
        <end position="183"/>
    </location>
</feature>
<feature type="helix" evidence="4">
    <location>
        <begin position="185"/>
        <end position="196"/>
    </location>
</feature>
<feature type="strand" evidence="4">
    <location>
        <begin position="203"/>
        <end position="205"/>
    </location>
</feature>
<reference key="1">
    <citation type="journal article" date="1989" name="Mol. Biochem. Parasitol.">
        <title>A transcriptional analysis of the Trypanosoma brucei hsp83 gene cluster.</title>
        <authorList>
            <person name="Mottram J."/>
            <person name="Murphy W."/>
            <person name="Agabian N."/>
        </authorList>
    </citation>
    <scope>NUCLEOTIDE SEQUENCE [GENOMIC DNA]</scope>
    <source>
        <strain>LstaR</strain>
    </source>
</reference>
<keyword id="KW-0002">3D-structure</keyword>
<keyword id="KW-0067">ATP-binding</keyword>
<keyword id="KW-0143">Chaperone</keyword>
<keyword id="KW-0963">Cytoplasm</keyword>
<keyword id="KW-0547">Nucleotide-binding</keyword>
<keyword id="KW-0346">Stress response</keyword>
<comment type="function">
    <text evidence="1">Molecular chaperone that promotes the maturation, structural maintenance and proper regulation of specific target proteins involved for instance in cell cycle control and signal transduction. Undergoes a functional cycle that is linked to its ATPase activity. This cycle probably induces conformational changes in the client proteins, thereby causing their activation. Interacts dynamically with various co-chaperones that modulate its substrate recognition, ATPase cycle and chaperone function (By similarity).</text>
</comment>
<comment type="subunit">
    <text evidence="1">Homodimer.</text>
</comment>
<comment type="subcellular location">
    <subcellularLocation>
        <location>Cytoplasm</location>
    </subcellularLocation>
</comment>
<comment type="domain">
    <text evidence="1">The TPR repeat-binding motif mediates interaction with TPR repeat-containing proteins.</text>
</comment>
<comment type="similarity">
    <text evidence="3">Belongs to the heat shock protein 90 family.</text>
</comment>